<keyword id="KW-0903">Direct protein sequencing</keyword>
<keyword id="KW-0382">Hypotensive agent</keyword>
<keyword id="KW-0481">Metalloenzyme inhibitor</keyword>
<keyword id="KW-0483">Metalloprotease inhibitor</keyword>
<keyword id="KW-0582">Pharmaceutical</keyword>
<keyword id="KW-0646">Protease inhibitor</keyword>
<keyword id="KW-0873">Pyrrolidone carboxylic acid</keyword>
<keyword id="KW-0964">Secreted</keyword>
<keyword id="KW-0800">Toxin</keyword>
<dbReference type="GO" id="GO:0005576">
    <property type="term" value="C:extracellular region"/>
    <property type="evidence" value="ECO:0007669"/>
    <property type="project" value="UniProtKB-SubCell"/>
</dbReference>
<dbReference type="GO" id="GO:0030414">
    <property type="term" value="F:peptidase inhibitor activity"/>
    <property type="evidence" value="ECO:0007669"/>
    <property type="project" value="UniProtKB-KW"/>
</dbReference>
<dbReference type="GO" id="GO:0090729">
    <property type="term" value="F:toxin activity"/>
    <property type="evidence" value="ECO:0007669"/>
    <property type="project" value="UniProtKB-KW"/>
</dbReference>
<dbReference type="GO" id="GO:0008217">
    <property type="term" value="P:regulation of blood pressure"/>
    <property type="evidence" value="ECO:0007669"/>
    <property type="project" value="UniProtKB-KW"/>
</dbReference>
<reference evidence="6" key="1">
    <citation type="journal article" date="2004" name="Peptides">
        <title>Identification of five new bradykinin potentiating peptides (BPPs) from Bothrops jararaca crude venom by using electrospray ionization tandem mass spectrometry after a two-step liquid chromatography.</title>
        <authorList>
            <person name="Ianzer D."/>
            <person name="Konno K."/>
            <person name="Marques-Porto R."/>
            <person name="Portaro F.C.V."/>
            <person name="Stoecklin R."/>
            <person name="de Camargo A.C.M."/>
            <person name="Pimenta D.C."/>
        </authorList>
    </citation>
    <scope>PROTEIN SEQUENCE (BPP-9A AND BPP-12C)</scope>
    <scope>FUNCTION</scope>
    <scope>SUBCELLULAR LOCATION</scope>
    <scope>TISSUE SPECIFICITY</scope>
    <scope>MASS SPECTROMETRY</scope>
    <scope>PYROGLUTAMATE FORMATION AT GLN-1 AND GLN-4</scope>
    <source>
        <tissue evidence="1">Venom</tissue>
    </source>
</reference>
<reference key="2">
    <citation type="journal article" date="2012" name="Mol. Cell. Proteomics">
        <title>Peptidomics of three Bothrops snake venoms: insights into the molecular diversification of proteomes and peptidomes.</title>
        <authorList>
            <person name="Tashima A.K."/>
            <person name="Zelanis A."/>
            <person name="Kitano E.S."/>
            <person name="Ianzer D."/>
            <person name="Melo R.L."/>
            <person name="Rioli V."/>
            <person name="Sant'anna S.S."/>
            <person name="Schenberg A.C."/>
            <person name="Camargo A.C."/>
            <person name="Serrano S.M.T."/>
        </authorList>
    </citation>
    <scope>PROTEIN SEQUENCE (BPP-9A AND BPP-12C)</scope>
    <scope>PYROGLUTAMATE FORMATION AT GLN-1 AND GLN-4</scope>
    <scope>MASS SPECTROMETRY</scope>
    <source>
        <tissue>Venom</tissue>
    </source>
</reference>
<reference key="3">
    <citation type="journal article" date="2010" name="J. Proteome Res.">
        <title>Analysis of the ontogenetic variation in the venom proteome/peptidome of Bothrops jararaca reveals different strategies to deal with prey.</title>
        <authorList>
            <person name="Zelanis A."/>
            <person name="Tashima A.K."/>
            <person name="Rocha M.M."/>
            <person name="Furtado M.F."/>
            <person name="Camargo A.C."/>
            <person name="Ho P.L."/>
            <person name="Serrano S.M."/>
        </authorList>
    </citation>
    <scope>PROTEIN SEQUENCE</scope>
    <scope>PYROGLUTAMATE FORMATION AT GLN-1</scope>
    <scope>DEVELOPMENTAL STAGE (BPP-12C)</scope>
    <scope>IDENTIFICATION BY MASS SPECTROMETRY</scope>
    <source>
        <tissue>Venom</tissue>
    </source>
</reference>
<reference key="4">
    <citation type="journal article" date="1971" name="Biochemistry">
        <title>Angiotensin-converting enzyme inhibitors from the venom of Bothrops jararaca. Isolation, elucidation of structure, and synthesis.</title>
        <authorList>
            <person name="Ondetti M.A."/>
            <person name="Williams N.J."/>
            <person name="Sabo E.F."/>
            <person name="Pluscec J."/>
            <person name="Weaver E.R."/>
            <person name="Kocy O."/>
        </authorList>
    </citation>
    <scope>PROTEIN SEQUENCE OF 4-9</scope>
    <scope>FUNCTION</scope>
    <source>
        <tissue>Venom</tissue>
    </source>
</reference>
<reference key="5">
    <citation type="journal article" date="2005" name="Rapid Commun. Mass Spectrom.">
        <title>Fast analysis of low molecular mass compounds present in snake venom: identification of ten new pyroglutamate-containing peptides.</title>
        <authorList>
            <person name="Wermelinger L.S."/>
            <person name="Dutra D.L."/>
            <person name="Oliveira-Carvalho A.L."/>
            <person name="Soares M.R."/>
            <person name="Bloch C. Jr."/>
            <person name="Zingali R.B."/>
        </authorList>
    </citation>
    <scope>PROTEIN SEQUENCE OF 4-9</scope>
    <scope>SUBCELLULAR LOCATION</scope>
    <scope>TISSUE SPECIFICITY</scope>
    <scope>MASS SPECTROMETRY</scope>
    <scope>PYROGLUTAMATE FORMATION AT GLN-4</scope>
    <source>
        <tissue>Venom</tissue>
    </source>
</reference>
<reference key="6">
    <citation type="journal article" date="2007" name="Rapid Commun. Mass Spectrom.">
        <title>Mass spectrometric analysis of the individual variability of Bothrops jararaca venom peptide fraction. Evidence for sex-based variation among the bradykinin-potentiating peptides.</title>
        <authorList>
            <person name="Pimenta D.C."/>
            <person name="Prezoto B.C."/>
            <person name="Konno K."/>
            <person name="de Melo R.L."/>
            <person name="Furtado M.F."/>
            <person name="de Camargo A.C.M."/>
            <person name="Serrano S.M.T."/>
        </authorList>
    </citation>
    <scope>PROTEIN SEQUENCE OF 4-8 (BPP-9A-F)</scope>
    <scope>FUNCTION</scope>
    <scope>SUBCELLULAR LOCATION</scope>
    <scope>TISSUE SPECIFICITY</scope>
    <scope>MASS SPECTROMETRY</scope>
    <scope>PYROGLUTAMATE FORMATION AT GLN-4</scope>
    <source>
        <tissue>Venom</tissue>
    </source>
</reference>
<reference key="7">
    <citation type="journal article" date="2002" name="Biochemistry">
        <title>Selective inhibition of the C-domain of angiotensin I converting enzyme by bradykinin potentiating peptides.</title>
        <authorList>
            <person name="Cotton J."/>
            <person name="Hayashi M.A."/>
            <person name="Cuniasse P."/>
            <person name="Vazeux G."/>
            <person name="Ianzer D."/>
            <person name="De Camargo A.C."/>
            <person name="Dive V."/>
        </authorList>
    </citation>
    <scope>SYNTHESIS OF 4-12 (BPP-9A)</scope>
    <scope>FUNCTION</scope>
</reference>
<reference key="8">
    <citation type="journal article" date="1977" name="Biochemistry">
        <title>Design of potent competitive inhibitors of angiotensin-converting enzyme. Carboxyalkanoyl and mercaptoalkanoyl amino acids.</title>
        <authorList>
            <person name="Cushman D.W."/>
            <person name="Cheung H.S."/>
            <person name="Sabo E.F."/>
            <person name="Ondetti M.A."/>
        </authorList>
    </citation>
    <scope>PHARMACEUTICAL</scope>
</reference>
<name>BPPCC_BOTJA</name>
<comment type="function">
    <molecule>Bradykinin-potentiating peptide 9a</molecule>
    <text>Inhibits the activity of the angiotensin-converting enzyme (ACE) by a preferential interaction with its C-domain. May also potentiate the hypotensive effects of bradykinin.</text>
</comment>
<comment type="function">
    <molecule>Bradykinin-potentiating peptide 9a-F</molecule>
    <text>Has much lower activity than BPP-9a.</text>
</comment>
<comment type="subcellular location">
    <subcellularLocation>
        <location evidence="1 2 3">Secreted</location>
    </subcellularLocation>
</comment>
<comment type="tissue specificity">
    <text evidence="1 2 3">Expressed by the venom gland.</text>
</comment>
<comment type="developmental stage">
    <text evidence="4">This protein seems to be found in newborn B.jararaca venom but not in adult snake venom.</text>
</comment>
<comment type="mass spectrometry" mass="1101.3" method="Electrospray" evidence="1">
    <molecule>Bradykinin-potentiating peptide 9a</molecule>
    <text>BPP-9a.</text>
</comment>
<comment type="mass spectrometry" mass="1101.46" method="MALDI" evidence="2">
    <molecule>Bradykinin-potentiating peptide 9a</molecule>
    <text>BPP-9a.</text>
</comment>
<comment type="mass spectrometry" mass="665.8" method="Electrospray" evidence="1">
    <molecule>Bradykinin-potentiating peptide 9a-F</molecule>
    <text>BPP-9a-F.</text>
</comment>
<comment type="mass spectrometry" mass="665.33" method="MALDI" evidence="3">
    <molecule>Bradykinin-potentiating peptide 9a-F</molecule>
    <text>BPP-9a-F.</text>
</comment>
<comment type="mass spectrometry" mass="1485.8" method="Electrospray" evidence="1 5">
    <molecule>Bradykinin-potentiating peptide 12c</molecule>
    <text>BPP-12c.</text>
</comment>
<comment type="pharmaceutical">
    <text>The nonapeptide BPP-9a was synthesized under the name SQ-20881. It greatly clarified the importance of ACE in hypertension. However, it's lack of oral activity limits it's therapeutic utility.</text>
</comment>
<comment type="miscellaneous">
    <text evidence="7">Bradykinin-potentiating peptide 9a-F is present only in female snakes.</text>
</comment>
<comment type="similarity">
    <text evidence="6">Belongs to the bradykinin-potentiating peptide family.</text>
</comment>
<feature type="peptide" id="PRO_0000292923" description="Bradykinin-potentiating peptide 12c" evidence="1">
    <location>
        <begin position="1"/>
        <end position="12"/>
    </location>
</feature>
<feature type="peptide" id="PRO_0000292915" description="Bradykinin-potentiating peptide 9a">
    <location>
        <begin position="4"/>
        <end position="12"/>
    </location>
</feature>
<feature type="peptide" id="PRO_0000292916" description="Bradykinin-potentiating peptide 9a-F">
    <location>
        <begin position="4"/>
        <end position="8"/>
    </location>
</feature>
<feature type="modified residue" description="Pyrrolidone carboxylic acid" evidence="1 4 5">
    <location>
        <position position="1"/>
    </location>
</feature>
<feature type="modified residue" description="Pyrrolidone carboxylic acid" evidence="1 2 3 5">
    <location>
        <position position="4"/>
    </location>
</feature>
<proteinExistence type="evidence at protein level"/>
<accession>P85162</accession>
<accession>P85166</accession>
<protein>
    <recommendedName>
        <fullName>Bradykinin-potentiating peptide 12c</fullName>
        <shortName>BPP-12c</shortName>
    </recommendedName>
    <component>
        <recommendedName>
            <fullName>Bradykinin-potentiating peptide 9a</fullName>
            <shortName>BPP-9a</shortName>
            <shortName>BPP-a</shortName>
        </recommendedName>
        <alternativeName>
            <fullName>Bradykinin-potentiating peptide V-6-I</fullName>
            <shortName>BPPV-6-I</shortName>
        </alternativeName>
        <alternativeName>
            <fullName>Teprotide</fullName>
        </alternativeName>
    </component>
    <component>
        <recommendedName>
            <fullName>Bradykinin-potentiating peptide 9a-F</fullName>
            <shortName>BPP-9a-F</shortName>
        </recommendedName>
        <alternativeName>
            <fullName>Bradykinin-potentiating peptide 5b</fullName>
            <shortName>BPP-5b</shortName>
        </alternativeName>
    </component>
</protein>
<sequence length="12" mass="1504">QWAQWPRPQIPP</sequence>
<evidence type="ECO:0000269" key="1">
    <source>
    </source>
</evidence>
<evidence type="ECO:0000269" key="2">
    <source>
    </source>
</evidence>
<evidence type="ECO:0000269" key="3">
    <source>
    </source>
</evidence>
<evidence type="ECO:0000269" key="4">
    <source>
    </source>
</evidence>
<evidence type="ECO:0000269" key="5">
    <source>
    </source>
</evidence>
<evidence type="ECO:0000305" key="6"/>
<evidence type="ECO:0000305" key="7">
    <source>
    </source>
</evidence>
<organism>
    <name type="scientific">Bothrops jararaca</name>
    <name type="common">Jararaca</name>
    <name type="synonym">Bothrops jajaraca</name>
    <dbReference type="NCBI Taxonomy" id="8724"/>
    <lineage>
        <taxon>Eukaryota</taxon>
        <taxon>Metazoa</taxon>
        <taxon>Chordata</taxon>
        <taxon>Craniata</taxon>
        <taxon>Vertebrata</taxon>
        <taxon>Euteleostomi</taxon>
        <taxon>Lepidosauria</taxon>
        <taxon>Squamata</taxon>
        <taxon>Bifurcata</taxon>
        <taxon>Unidentata</taxon>
        <taxon>Episquamata</taxon>
        <taxon>Toxicofera</taxon>
        <taxon>Serpentes</taxon>
        <taxon>Colubroidea</taxon>
        <taxon>Viperidae</taxon>
        <taxon>Crotalinae</taxon>
        <taxon>Bothrops</taxon>
    </lineage>
</organism>